<proteinExistence type="evidence at transcript level"/>
<gene>
    <name type="primary">Cyp28c1</name>
    <name type="ORF">CG1895</name>
</gene>
<protein>
    <recommendedName>
        <fullName>Probable cytochrome P450 28c1</fullName>
        <ecNumber>1.14.-.-</ecNumber>
    </recommendedName>
    <alternativeName>
        <fullName>CYPXXVIIIC1</fullName>
    </alternativeName>
</protein>
<name>C28C1_DROME</name>
<keyword id="KW-0256">Endoplasmic reticulum</keyword>
<keyword id="KW-0349">Heme</keyword>
<keyword id="KW-0408">Iron</keyword>
<keyword id="KW-0472">Membrane</keyword>
<keyword id="KW-0479">Metal-binding</keyword>
<keyword id="KW-0492">Microsome</keyword>
<keyword id="KW-0503">Monooxygenase</keyword>
<keyword id="KW-0560">Oxidoreductase</keyword>
<keyword id="KW-1185">Reference proteome</keyword>
<accession>Q9VYT8</accession>
<accession>Q1WW98</accession>
<organism>
    <name type="scientific">Drosophila melanogaster</name>
    <name type="common">Fruit fly</name>
    <dbReference type="NCBI Taxonomy" id="7227"/>
    <lineage>
        <taxon>Eukaryota</taxon>
        <taxon>Metazoa</taxon>
        <taxon>Ecdysozoa</taxon>
        <taxon>Arthropoda</taxon>
        <taxon>Hexapoda</taxon>
        <taxon>Insecta</taxon>
        <taxon>Pterygota</taxon>
        <taxon>Neoptera</taxon>
        <taxon>Endopterygota</taxon>
        <taxon>Diptera</taxon>
        <taxon>Brachycera</taxon>
        <taxon>Muscomorpha</taxon>
        <taxon>Ephydroidea</taxon>
        <taxon>Drosophilidae</taxon>
        <taxon>Drosophila</taxon>
        <taxon>Sophophora</taxon>
    </lineage>
</organism>
<comment type="function">
    <text evidence="1">May be involved in the metabolism of insect hormones and in the breakdown of synthetic insecticides.</text>
</comment>
<comment type="cofactor">
    <cofactor evidence="1">
        <name>heme</name>
        <dbReference type="ChEBI" id="CHEBI:30413"/>
    </cofactor>
</comment>
<comment type="subcellular location">
    <subcellularLocation>
        <location evidence="2">Endoplasmic reticulum membrane</location>
        <topology evidence="2">Peripheral membrane protein</topology>
    </subcellularLocation>
    <subcellularLocation>
        <location evidence="2">Microsome membrane</location>
        <topology evidence="2">Peripheral membrane protein</topology>
    </subcellularLocation>
</comment>
<comment type="similarity">
    <text evidence="2">Belongs to the cytochrome P450 family.</text>
</comment>
<dbReference type="EC" id="1.14.-.-"/>
<dbReference type="EMBL" id="AE014298">
    <property type="protein sequence ID" value="AAF48100.1"/>
    <property type="molecule type" value="Genomic_DNA"/>
</dbReference>
<dbReference type="EMBL" id="BT025008">
    <property type="protein sequence ID" value="ABE01238.1"/>
    <property type="molecule type" value="mRNA"/>
</dbReference>
<dbReference type="RefSeq" id="NP_001259464.1">
    <property type="nucleotide sequence ID" value="NM_001272535.1"/>
</dbReference>
<dbReference type="RefSeq" id="NP_572752.1">
    <property type="nucleotide sequence ID" value="NM_132524.2"/>
</dbReference>
<dbReference type="SMR" id="Q9VYT8"/>
<dbReference type="FunCoup" id="Q9VYT8">
    <property type="interactions" value="16"/>
</dbReference>
<dbReference type="IntAct" id="Q9VYT8">
    <property type="interactions" value="7"/>
</dbReference>
<dbReference type="STRING" id="7227.FBpp0305230"/>
<dbReference type="PaxDb" id="7227-FBpp0305230"/>
<dbReference type="DNASU" id="32138"/>
<dbReference type="EnsemblMetazoa" id="FBtr0073565">
    <property type="protein sequence ID" value="FBpp0073409"/>
    <property type="gene ID" value="FBgn0030339"/>
</dbReference>
<dbReference type="EnsemblMetazoa" id="FBtr0333016">
    <property type="protein sequence ID" value="FBpp0305230"/>
    <property type="gene ID" value="FBgn0030339"/>
</dbReference>
<dbReference type="GeneID" id="32138"/>
<dbReference type="KEGG" id="dme:Dmel_CG1895"/>
<dbReference type="UCSC" id="CG1895-RA">
    <property type="organism name" value="d. melanogaster"/>
</dbReference>
<dbReference type="AGR" id="FB:FBgn0030339"/>
<dbReference type="CTD" id="32138"/>
<dbReference type="FlyBase" id="FBgn0030339">
    <property type="gene designation" value="Cyp28c1"/>
</dbReference>
<dbReference type="VEuPathDB" id="VectorBase:FBgn0030339"/>
<dbReference type="eggNOG" id="KOG0158">
    <property type="taxonomic scope" value="Eukaryota"/>
</dbReference>
<dbReference type="GeneTree" id="ENSGT00940000167276"/>
<dbReference type="HOGENOM" id="CLU_001570_5_2_1"/>
<dbReference type="InParanoid" id="Q9VYT8"/>
<dbReference type="OMA" id="GSFPNMV"/>
<dbReference type="OrthoDB" id="2789670at2759"/>
<dbReference type="PhylomeDB" id="Q9VYT8"/>
<dbReference type="SignaLink" id="Q9VYT8"/>
<dbReference type="BioGRID-ORCS" id="32138">
    <property type="hits" value="0 hits in 1 CRISPR screen"/>
</dbReference>
<dbReference type="GenomeRNAi" id="32138"/>
<dbReference type="PRO" id="PR:Q9VYT8"/>
<dbReference type="Proteomes" id="UP000000803">
    <property type="component" value="Chromosome X"/>
</dbReference>
<dbReference type="Bgee" id="FBgn0030339">
    <property type="expression patterns" value="Expressed in spermatid in male reproductive gland and 12 other cell types or tissues"/>
</dbReference>
<dbReference type="ExpressionAtlas" id="Q9VYT8">
    <property type="expression patterns" value="baseline and differential"/>
</dbReference>
<dbReference type="GO" id="GO:0005789">
    <property type="term" value="C:endoplasmic reticulum membrane"/>
    <property type="evidence" value="ECO:0007669"/>
    <property type="project" value="UniProtKB-SubCell"/>
</dbReference>
<dbReference type="GO" id="GO:0020037">
    <property type="term" value="F:heme binding"/>
    <property type="evidence" value="ECO:0007669"/>
    <property type="project" value="InterPro"/>
</dbReference>
<dbReference type="GO" id="GO:0005506">
    <property type="term" value="F:iron ion binding"/>
    <property type="evidence" value="ECO:0007669"/>
    <property type="project" value="InterPro"/>
</dbReference>
<dbReference type="GO" id="GO:0004497">
    <property type="term" value="F:monooxygenase activity"/>
    <property type="evidence" value="ECO:0007669"/>
    <property type="project" value="UniProtKB-KW"/>
</dbReference>
<dbReference type="GO" id="GO:0016705">
    <property type="term" value="F:oxidoreductase activity, acting on paired donors, with incorporation or reduction of molecular oxygen"/>
    <property type="evidence" value="ECO:0007669"/>
    <property type="project" value="InterPro"/>
</dbReference>
<dbReference type="CDD" id="cd11056">
    <property type="entry name" value="CYP6-like"/>
    <property type="match status" value="1"/>
</dbReference>
<dbReference type="Gene3D" id="1.10.630.10">
    <property type="entry name" value="Cytochrome P450"/>
    <property type="match status" value="1"/>
</dbReference>
<dbReference type="InterPro" id="IPR001128">
    <property type="entry name" value="Cyt_P450"/>
</dbReference>
<dbReference type="InterPro" id="IPR017972">
    <property type="entry name" value="Cyt_P450_CS"/>
</dbReference>
<dbReference type="InterPro" id="IPR002401">
    <property type="entry name" value="Cyt_P450_E_grp-I"/>
</dbReference>
<dbReference type="InterPro" id="IPR036396">
    <property type="entry name" value="Cyt_P450_sf"/>
</dbReference>
<dbReference type="InterPro" id="IPR050476">
    <property type="entry name" value="Insect_CytP450_Detox"/>
</dbReference>
<dbReference type="PANTHER" id="PTHR24292">
    <property type="entry name" value="CYTOCHROME P450"/>
    <property type="match status" value="1"/>
</dbReference>
<dbReference type="PANTHER" id="PTHR24292:SF84">
    <property type="entry name" value="CYTOCHROME P450 28A5-RELATED"/>
    <property type="match status" value="1"/>
</dbReference>
<dbReference type="Pfam" id="PF00067">
    <property type="entry name" value="p450"/>
    <property type="match status" value="1"/>
</dbReference>
<dbReference type="PRINTS" id="PR00463">
    <property type="entry name" value="EP450I"/>
</dbReference>
<dbReference type="PRINTS" id="PR00385">
    <property type="entry name" value="P450"/>
</dbReference>
<dbReference type="SUPFAM" id="SSF48264">
    <property type="entry name" value="Cytochrome P450"/>
    <property type="match status" value="1"/>
</dbReference>
<dbReference type="PROSITE" id="PS00086">
    <property type="entry name" value="CYTOCHROME_P450"/>
    <property type="match status" value="1"/>
</dbReference>
<evidence type="ECO:0000250" key="1"/>
<evidence type="ECO:0000305" key="2"/>
<sequence>MFGSLLLGIATLLGAIYAFLVSNFGHWRRRGVTEPRALPLFGSFPNMIWPRQHFTMDMRDIYMHYRNTHSYVGCYLLRAPKLLVLEPRLVYEIYVSAFSHFENNDASKMVDIAKDRLVALNPFVLEGEEWRHQRAVFSTLLTNGRIRTTHAIMQRVCLDLCQFIAIKSAGGKDLDCIDLGLRFTGESLFDCVLGIQARTFTDNPLPVVRQNHEMSAENRGLAIAGAVHGLFPNLPRWLRPKVFPRSHDRFYGQMISEALRLRRSKHQERNDFINHLLEMQRELDLSEEDMASHAMTFMFDGLDTTSNSIAHCLLLLGRNPDCQRRLYEELQLVNPGGYLPDLDALIDLPYLSACFNESLRIYPAGGWASKTCTKEYELRGSHHSEPLKLRPGDHVMVPIYALHNDPDLYPEPDVFRPERFLDGGLKNCKQQGIFLGFGNGPRQCVGMRLGLAMAKAALAAIVQRFEVVVSPRTLNGTELDPLIFVGVHKGGIWLQFVPRKNVTTK</sequence>
<reference key="1">
    <citation type="journal article" date="2000" name="Science">
        <title>The genome sequence of Drosophila melanogaster.</title>
        <authorList>
            <person name="Adams M.D."/>
            <person name="Celniker S.E."/>
            <person name="Holt R.A."/>
            <person name="Evans C.A."/>
            <person name="Gocayne J.D."/>
            <person name="Amanatides P.G."/>
            <person name="Scherer S.E."/>
            <person name="Li P.W."/>
            <person name="Hoskins R.A."/>
            <person name="Galle R.F."/>
            <person name="George R.A."/>
            <person name="Lewis S.E."/>
            <person name="Richards S."/>
            <person name="Ashburner M."/>
            <person name="Henderson S.N."/>
            <person name="Sutton G.G."/>
            <person name="Wortman J.R."/>
            <person name="Yandell M.D."/>
            <person name="Zhang Q."/>
            <person name="Chen L.X."/>
            <person name="Brandon R.C."/>
            <person name="Rogers Y.-H.C."/>
            <person name="Blazej R.G."/>
            <person name="Champe M."/>
            <person name="Pfeiffer B.D."/>
            <person name="Wan K.H."/>
            <person name="Doyle C."/>
            <person name="Baxter E.G."/>
            <person name="Helt G."/>
            <person name="Nelson C.R."/>
            <person name="Miklos G.L.G."/>
            <person name="Abril J.F."/>
            <person name="Agbayani A."/>
            <person name="An H.-J."/>
            <person name="Andrews-Pfannkoch C."/>
            <person name="Baldwin D."/>
            <person name="Ballew R.M."/>
            <person name="Basu A."/>
            <person name="Baxendale J."/>
            <person name="Bayraktaroglu L."/>
            <person name="Beasley E.M."/>
            <person name="Beeson K.Y."/>
            <person name="Benos P.V."/>
            <person name="Berman B.P."/>
            <person name="Bhandari D."/>
            <person name="Bolshakov S."/>
            <person name="Borkova D."/>
            <person name="Botchan M.R."/>
            <person name="Bouck J."/>
            <person name="Brokstein P."/>
            <person name="Brottier P."/>
            <person name="Burtis K.C."/>
            <person name="Busam D.A."/>
            <person name="Butler H."/>
            <person name="Cadieu E."/>
            <person name="Center A."/>
            <person name="Chandra I."/>
            <person name="Cherry J.M."/>
            <person name="Cawley S."/>
            <person name="Dahlke C."/>
            <person name="Davenport L.B."/>
            <person name="Davies P."/>
            <person name="de Pablos B."/>
            <person name="Delcher A."/>
            <person name="Deng Z."/>
            <person name="Mays A.D."/>
            <person name="Dew I."/>
            <person name="Dietz S.M."/>
            <person name="Dodson K."/>
            <person name="Doup L.E."/>
            <person name="Downes M."/>
            <person name="Dugan-Rocha S."/>
            <person name="Dunkov B.C."/>
            <person name="Dunn P."/>
            <person name="Durbin K.J."/>
            <person name="Evangelista C.C."/>
            <person name="Ferraz C."/>
            <person name="Ferriera S."/>
            <person name="Fleischmann W."/>
            <person name="Fosler C."/>
            <person name="Gabrielian A.E."/>
            <person name="Garg N.S."/>
            <person name="Gelbart W.M."/>
            <person name="Glasser K."/>
            <person name="Glodek A."/>
            <person name="Gong F."/>
            <person name="Gorrell J.H."/>
            <person name="Gu Z."/>
            <person name="Guan P."/>
            <person name="Harris M."/>
            <person name="Harris N.L."/>
            <person name="Harvey D.A."/>
            <person name="Heiman T.J."/>
            <person name="Hernandez J.R."/>
            <person name="Houck J."/>
            <person name="Hostin D."/>
            <person name="Houston K.A."/>
            <person name="Howland T.J."/>
            <person name="Wei M.-H."/>
            <person name="Ibegwam C."/>
            <person name="Jalali M."/>
            <person name="Kalush F."/>
            <person name="Karpen G.H."/>
            <person name="Ke Z."/>
            <person name="Kennison J.A."/>
            <person name="Ketchum K.A."/>
            <person name="Kimmel B.E."/>
            <person name="Kodira C.D."/>
            <person name="Kraft C.L."/>
            <person name="Kravitz S."/>
            <person name="Kulp D."/>
            <person name="Lai Z."/>
            <person name="Lasko P."/>
            <person name="Lei Y."/>
            <person name="Levitsky A.A."/>
            <person name="Li J.H."/>
            <person name="Li Z."/>
            <person name="Liang Y."/>
            <person name="Lin X."/>
            <person name="Liu X."/>
            <person name="Mattei B."/>
            <person name="McIntosh T.C."/>
            <person name="McLeod M.P."/>
            <person name="McPherson D."/>
            <person name="Merkulov G."/>
            <person name="Milshina N.V."/>
            <person name="Mobarry C."/>
            <person name="Morris J."/>
            <person name="Moshrefi A."/>
            <person name="Mount S.M."/>
            <person name="Moy M."/>
            <person name="Murphy B."/>
            <person name="Murphy L."/>
            <person name="Muzny D.M."/>
            <person name="Nelson D.L."/>
            <person name="Nelson D.R."/>
            <person name="Nelson K.A."/>
            <person name="Nixon K."/>
            <person name="Nusskern D.R."/>
            <person name="Pacleb J.M."/>
            <person name="Palazzolo M."/>
            <person name="Pittman G.S."/>
            <person name="Pan S."/>
            <person name="Pollard J."/>
            <person name="Puri V."/>
            <person name="Reese M.G."/>
            <person name="Reinert K."/>
            <person name="Remington K."/>
            <person name="Saunders R.D.C."/>
            <person name="Scheeler F."/>
            <person name="Shen H."/>
            <person name="Shue B.C."/>
            <person name="Siden-Kiamos I."/>
            <person name="Simpson M."/>
            <person name="Skupski M.P."/>
            <person name="Smith T.J."/>
            <person name="Spier E."/>
            <person name="Spradling A.C."/>
            <person name="Stapleton M."/>
            <person name="Strong R."/>
            <person name="Sun E."/>
            <person name="Svirskas R."/>
            <person name="Tector C."/>
            <person name="Turner R."/>
            <person name="Venter E."/>
            <person name="Wang A.H."/>
            <person name="Wang X."/>
            <person name="Wang Z.-Y."/>
            <person name="Wassarman D.A."/>
            <person name="Weinstock G.M."/>
            <person name="Weissenbach J."/>
            <person name="Williams S.M."/>
            <person name="Woodage T."/>
            <person name="Worley K.C."/>
            <person name="Wu D."/>
            <person name="Yang S."/>
            <person name="Yao Q.A."/>
            <person name="Ye J."/>
            <person name="Yeh R.-F."/>
            <person name="Zaveri J.S."/>
            <person name="Zhan M."/>
            <person name="Zhang G."/>
            <person name="Zhao Q."/>
            <person name="Zheng L."/>
            <person name="Zheng X.H."/>
            <person name="Zhong F.N."/>
            <person name="Zhong W."/>
            <person name="Zhou X."/>
            <person name="Zhu S.C."/>
            <person name="Zhu X."/>
            <person name="Smith H.O."/>
            <person name="Gibbs R.A."/>
            <person name="Myers E.W."/>
            <person name="Rubin G.M."/>
            <person name="Venter J.C."/>
        </authorList>
    </citation>
    <scope>NUCLEOTIDE SEQUENCE [LARGE SCALE GENOMIC DNA]</scope>
    <source>
        <strain>Berkeley</strain>
    </source>
</reference>
<reference key="2">
    <citation type="journal article" date="2002" name="Genome Biol.">
        <title>Annotation of the Drosophila melanogaster euchromatic genome: a systematic review.</title>
        <authorList>
            <person name="Misra S."/>
            <person name="Crosby M.A."/>
            <person name="Mungall C.J."/>
            <person name="Matthews B.B."/>
            <person name="Campbell K.S."/>
            <person name="Hradecky P."/>
            <person name="Huang Y."/>
            <person name="Kaminker J.S."/>
            <person name="Millburn G.H."/>
            <person name="Prochnik S.E."/>
            <person name="Smith C.D."/>
            <person name="Tupy J.L."/>
            <person name="Whitfield E.J."/>
            <person name="Bayraktaroglu L."/>
            <person name="Berman B.P."/>
            <person name="Bettencourt B.R."/>
            <person name="Celniker S.E."/>
            <person name="de Grey A.D.N.J."/>
            <person name="Drysdale R.A."/>
            <person name="Harris N.L."/>
            <person name="Richter J."/>
            <person name="Russo S."/>
            <person name="Schroeder A.J."/>
            <person name="Shu S.Q."/>
            <person name="Stapleton M."/>
            <person name="Yamada C."/>
            <person name="Ashburner M."/>
            <person name="Gelbart W.M."/>
            <person name="Rubin G.M."/>
            <person name="Lewis S.E."/>
        </authorList>
    </citation>
    <scope>GENOME REANNOTATION</scope>
    <source>
        <strain>Berkeley</strain>
    </source>
</reference>
<reference key="3">
    <citation type="submission" date="2006-03" db="EMBL/GenBank/DDBJ databases">
        <authorList>
            <person name="Stapleton M."/>
            <person name="Carlson J.W."/>
            <person name="Chavez C."/>
            <person name="Frise E."/>
            <person name="George R.A."/>
            <person name="Pacleb J.M."/>
            <person name="Park S."/>
            <person name="Wan K.H."/>
            <person name="Yu C."/>
            <person name="Celniker S.E."/>
        </authorList>
    </citation>
    <scope>NUCLEOTIDE SEQUENCE [LARGE SCALE MRNA]</scope>
    <source>
        <strain>Berkeley</strain>
    </source>
</reference>
<feature type="chain" id="PRO_0000051989" description="Probable cytochrome P450 28c1">
    <location>
        <begin position="1"/>
        <end position="505"/>
    </location>
</feature>
<feature type="binding site" description="axial binding residue" evidence="1">
    <location>
        <position position="444"/>
    </location>
    <ligand>
        <name>heme</name>
        <dbReference type="ChEBI" id="CHEBI:30413"/>
    </ligand>
    <ligandPart>
        <name>Fe</name>
        <dbReference type="ChEBI" id="CHEBI:18248"/>
    </ligandPart>
</feature>